<protein>
    <recommendedName>
        <fullName evidence="1">Large ribosomal subunit protein bL35</fullName>
    </recommendedName>
    <alternativeName>
        <fullName evidence="3">50S ribosomal protein L35</fullName>
    </alternativeName>
</protein>
<comment type="similarity">
    <text evidence="1">Belongs to the bacterial ribosomal protein bL35 family.</text>
</comment>
<proteinExistence type="inferred from homology"/>
<organism>
    <name type="scientific">Desulfatibacillum aliphaticivorans</name>
    <dbReference type="NCBI Taxonomy" id="218208"/>
    <lineage>
        <taxon>Bacteria</taxon>
        <taxon>Pseudomonadati</taxon>
        <taxon>Thermodesulfobacteriota</taxon>
        <taxon>Desulfobacteria</taxon>
        <taxon>Desulfobacterales</taxon>
        <taxon>Desulfatibacillaceae</taxon>
        <taxon>Desulfatibacillum</taxon>
    </lineage>
</organism>
<gene>
    <name evidence="1" type="primary">rpmI</name>
    <name type="ordered locus">Dalk_1799</name>
</gene>
<feature type="chain" id="PRO_1000127337" description="Large ribosomal subunit protein bL35">
    <location>
        <begin position="1"/>
        <end position="65"/>
    </location>
</feature>
<feature type="region of interest" description="Disordered" evidence="2">
    <location>
        <begin position="1"/>
        <end position="23"/>
    </location>
</feature>
<feature type="region of interest" description="Disordered" evidence="2">
    <location>
        <begin position="29"/>
        <end position="48"/>
    </location>
</feature>
<feature type="compositionally biased region" description="Basic residues" evidence="2">
    <location>
        <begin position="33"/>
        <end position="43"/>
    </location>
</feature>
<sequence length="65" mass="7642">MPKIKTNRAAAKRFKKTGSGKVKYSKSFGSHILAKKSRKRKRDLRQSHILDEANMKNIKRLLPYW</sequence>
<evidence type="ECO:0000255" key="1">
    <source>
        <dbReference type="HAMAP-Rule" id="MF_00514"/>
    </source>
</evidence>
<evidence type="ECO:0000256" key="2">
    <source>
        <dbReference type="SAM" id="MobiDB-lite"/>
    </source>
</evidence>
<evidence type="ECO:0000305" key="3"/>
<reference key="1">
    <citation type="journal article" date="2012" name="Environ. Microbiol.">
        <title>The genome sequence of Desulfatibacillum alkenivorans AK-01: a blueprint for anaerobic alkane oxidation.</title>
        <authorList>
            <person name="Callaghan A.V."/>
            <person name="Morris B.E."/>
            <person name="Pereira I.A."/>
            <person name="McInerney M.J."/>
            <person name="Austin R.N."/>
            <person name="Groves J.T."/>
            <person name="Kukor J.J."/>
            <person name="Suflita J.M."/>
            <person name="Young L.Y."/>
            <person name="Zylstra G.J."/>
            <person name="Wawrik B."/>
        </authorList>
    </citation>
    <scope>NUCLEOTIDE SEQUENCE [LARGE SCALE GENOMIC DNA]</scope>
    <source>
        <strain>AK-01</strain>
    </source>
</reference>
<accession>B8FFU1</accession>
<keyword id="KW-1185">Reference proteome</keyword>
<keyword id="KW-0687">Ribonucleoprotein</keyword>
<keyword id="KW-0689">Ribosomal protein</keyword>
<dbReference type="EMBL" id="CP001322">
    <property type="protein sequence ID" value="ACL03496.1"/>
    <property type="molecule type" value="Genomic_DNA"/>
</dbReference>
<dbReference type="RefSeq" id="WP_012610930.1">
    <property type="nucleotide sequence ID" value="NC_011768.1"/>
</dbReference>
<dbReference type="SMR" id="B8FFU1"/>
<dbReference type="KEGG" id="dal:Dalk_1799"/>
<dbReference type="eggNOG" id="COG0291">
    <property type="taxonomic scope" value="Bacteria"/>
</dbReference>
<dbReference type="HOGENOM" id="CLU_169643_1_1_7"/>
<dbReference type="Proteomes" id="UP000000739">
    <property type="component" value="Chromosome"/>
</dbReference>
<dbReference type="GO" id="GO:0022625">
    <property type="term" value="C:cytosolic large ribosomal subunit"/>
    <property type="evidence" value="ECO:0007669"/>
    <property type="project" value="TreeGrafter"/>
</dbReference>
<dbReference type="GO" id="GO:0003735">
    <property type="term" value="F:structural constituent of ribosome"/>
    <property type="evidence" value="ECO:0007669"/>
    <property type="project" value="InterPro"/>
</dbReference>
<dbReference type="GO" id="GO:0006412">
    <property type="term" value="P:translation"/>
    <property type="evidence" value="ECO:0007669"/>
    <property type="project" value="UniProtKB-UniRule"/>
</dbReference>
<dbReference type="FunFam" id="4.10.410.60:FF:000001">
    <property type="entry name" value="50S ribosomal protein L35"/>
    <property type="match status" value="1"/>
</dbReference>
<dbReference type="Gene3D" id="4.10.410.60">
    <property type="match status" value="1"/>
</dbReference>
<dbReference type="HAMAP" id="MF_00514">
    <property type="entry name" value="Ribosomal_bL35"/>
    <property type="match status" value="1"/>
</dbReference>
<dbReference type="InterPro" id="IPR001706">
    <property type="entry name" value="Ribosomal_bL35"/>
</dbReference>
<dbReference type="InterPro" id="IPR021137">
    <property type="entry name" value="Ribosomal_bL35-like"/>
</dbReference>
<dbReference type="InterPro" id="IPR018265">
    <property type="entry name" value="Ribosomal_bL35_CS"/>
</dbReference>
<dbReference type="InterPro" id="IPR037229">
    <property type="entry name" value="Ribosomal_bL35_sf"/>
</dbReference>
<dbReference type="NCBIfam" id="TIGR00001">
    <property type="entry name" value="rpmI_bact"/>
    <property type="match status" value="1"/>
</dbReference>
<dbReference type="PANTHER" id="PTHR33343">
    <property type="entry name" value="54S RIBOSOMAL PROTEIN BL35M"/>
    <property type="match status" value="1"/>
</dbReference>
<dbReference type="PANTHER" id="PTHR33343:SF1">
    <property type="entry name" value="LARGE RIBOSOMAL SUBUNIT PROTEIN BL35M"/>
    <property type="match status" value="1"/>
</dbReference>
<dbReference type="Pfam" id="PF01632">
    <property type="entry name" value="Ribosomal_L35p"/>
    <property type="match status" value="1"/>
</dbReference>
<dbReference type="PRINTS" id="PR00064">
    <property type="entry name" value="RIBOSOMALL35"/>
</dbReference>
<dbReference type="SUPFAM" id="SSF143034">
    <property type="entry name" value="L35p-like"/>
    <property type="match status" value="1"/>
</dbReference>
<dbReference type="PROSITE" id="PS00936">
    <property type="entry name" value="RIBOSOMAL_L35"/>
    <property type="match status" value="1"/>
</dbReference>
<name>RL35_DESAL</name>